<gene>
    <name evidence="1" type="primary">ribH</name>
    <name type="ordered locus">P9301_18331</name>
</gene>
<sequence length="158" mass="17171">MAIFEGSFTNASTLKVGIVIARFNDLITNKILSGCLDCLKRHGLDTSELSNQVDIVWVPGSFELPIAAKTLMKKKSYDVVIALGAVIRGETSHYDVVISEASKGISQVSNENNIPIIFGVLTTDTMQQALERAGIKNNLGWNYALQAIEMGSLIKNLN</sequence>
<proteinExistence type="inferred from homology"/>
<accession>A3PFD1</accession>
<organism>
    <name type="scientific">Prochlorococcus marinus (strain MIT 9301)</name>
    <dbReference type="NCBI Taxonomy" id="167546"/>
    <lineage>
        <taxon>Bacteria</taxon>
        <taxon>Bacillati</taxon>
        <taxon>Cyanobacteriota</taxon>
        <taxon>Cyanophyceae</taxon>
        <taxon>Synechococcales</taxon>
        <taxon>Prochlorococcaceae</taxon>
        <taxon>Prochlorococcus</taxon>
    </lineage>
</organism>
<comment type="function">
    <text evidence="1">Catalyzes the formation of 6,7-dimethyl-8-ribityllumazine by condensation of 5-amino-6-(D-ribitylamino)uracil with 3,4-dihydroxy-2-butanone 4-phosphate. This is the penultimate step in the biosynthesis of riboflavin.</text>
</comment>
<comment type="catalytic activity">
    <reaction evidence="1">
        <text>(2S)-2-hydroxy-3-oxobutyl phosphate + 5-amino-6-(D-ribitylamino)uracil = 6,7-dimethyl-8-(1-D-ribityl)lumazine + phosphate + 2 H2O + H(+)</text>
        <dbReference type="Rhea" id="RHEA:26152"/>
        <dbReference type="ChEBI" id="CHEBI:15377"/>
        <dbReference type="ChEBI" id="CHEBI:15378"/>
        <dbReference type="ChEBI" id="CHEBI:15934"/>
        <dbReference type="ChEBI" id="CHEBI:43474"/>
        <dbReference type="ChEBI" id="CHEBI:58201"/>
        <dbReference type="ChEBI" id="CHEBI:58830"/>
        <dbReference type="EC" id="2.5.1.78"/>
    </reaction>
</comment>
<comment type="pathway">
    <text evidence="1">Cofactor biosynthesis; riboflavin biosynthesis; riboflavin from 2-hydroxy-3-oxobutyl phosphate and 5-amino-6-(D-ribitylamino)uracil: step 1/2.</text>
</comment>
<comment type="similarity">
    <text evidence="1">Belongs to the DMRL synthase family.</text>
</comment>
<name>RISB_PROM0</name>
<keyword id="KW-1185">Reference proteome</keyword>
<keyword id="KW-0686">Riboflavin biosynthesis</keyword>
<keyword id="KW-0808">Transferase</keyword>
<dbReference type="EC" id="2.5.1.78" evidence="1"/>
<dbReference type="EMBL" id="CP000576">
    <property type="protein sequence ID" value="ABO18456.1"/>
    <property type="molecule type" value="Genomic_DNA"/>
</dbReference>
<dbReference type="RefSeq" id="WP_011863741.1">
    <property type="nucleotide sequence ID" value="NC_009091.1"/>
</dbReference>
<dbReference type="SMR" id="A3PFD1"/>
<dbReference type="STRING" id="167546.P9301_18331"/>
<dbReference type="KEGG" id="pmg:P9301_18331"/>
<dbReference type="eggNOG" id="COG0054">
    <property type="taxonomic scope" value="Bacteria"/>
</dbReference>
<dbReference type="HOGENOM" id="CLU_089358_1_0_3"/>
<dbReference type="OrthoDB" id="9809709at2"/>
<dbReference type="UniPathway" id="UPA00275">
    <property type="reaction ID" value="UER00404"/>
</dbReference>
<dbReference type="Proteomes" id="UP000001430">
    <property type="component" value="Chromosome"/>
</dbReference>
<dbReference type="GO" id="GO:0005829">
    <property type="term" value="C:cytosol"/>
    <property type="evidence" value="ECO:0007669"/>
    <property type="project" value="TreeGrafter"/>
</dbReference>
<dbReference type="GO" id="GO:0009349">
    <property type="term" value="C:riboflavin synthase complex"/>
    <property type="evidence" value="ECO:0007669"/>
    <property type="project" value="InterPro"/>
</dbReference>
<dbReference type="GO" id="GO:0000906">
    <property type="term" value="F:6,7-dimethyl-8-ribityllumazine synthase activity"/>
    <property type="evidence" value="ECO:0007669"/>
    <property type="project" value="UniProtKB-UniRule"/>
</dbReference>
<dbReference type="GO" id="GO:0009231">
    <property type="term" value="P:riboflavin biosynthetic process"/>
    <property type="evidence" value="ECO:0007669"/>
    <property type="project" value="UniProtKB-UniRule"/>
</dbReference>
<dbReference type="CDD" id="cd09209">
    <property type="entry name" value="Lumazine_synthase-I"/>
    <property type="match status" value="1"/>
</dbReference>
<dbReference type="Gene3D" id="3.40.50.960">
    <property type="entry name" value="Lumazine/riboflavin synthase"/>
    <property type="match status" value="1"/>
</dbReference>
<dbReference type="HAMAP" id="MF_00178">
    <property type="entry name" value="Lumazine_synth"/>
    <property type="match status" value="1"/>
</dbReference>
<dbReference type="InterPro" id="IPR034964">
    <property type="entry name" value="LS"/>
</dbReference>
<dbReference type="InterPro" id="IPR002180">
    <property type="entry name" value="LS/RS"/>
</dbReference>
<dbReference type="InterPro" id="IPR036467">
    <property type="entry name" value="LS/RS_sf"/>
</dbReference>
<dbReference type="NCBIfam" id="TIGR00114">
    <property type="entry name" value="lumazine-synth"/>
    <property type="match status" value="1"/>
</dbReference>
<dbReference type="PANTHER" id="PTHR21058:SF0">
    <property type="entry name" value="6,7-DIMETHYL-8-RIBITYLLUMAZINE SYNTHASE"/>
    <property type="match status" value="1"/>
</dbReference>
<dbReference type="PANTHER" id="PTHR21058">
    <property type="entry name" value="6,7-DIMETHYL-8-RIBITYLLUMAZINE SYNTHASE DMRL SYNTHASE LUMAZINE SYNTHASE"/>
    <property type="match status" value="1"/>
</dbReference>
<dbReference type="Pfam" id="PF00885">
    <property type="entry name" value="DMRL_synthase"/>
    <property type="match status" value="1"/>
</dbReference>
<dbReference type="SUPFAM" id="SSF52121">
    <property type="entry name" value="Lumazine synthase"/>
    <property type="match status" value="1"/>
</dbReference>
<protein>
    <recommendedName>
        <fullName evidence="1">6,7-dimethyl-8-ribityllumazine synthase</fullName>
        <shortName evidence="1">DMRL synthase</shortName>
        <shortName evidence="1">LS</shortName>
        <shortName evidence="1">Lumazine synthase</shortName>
        <ecNumber evidence="1">2.5.1.78</ecNumber>
    </recommendedName>
</protein>
<evidence type="ECO:0000255" key="1">
    <source>
        <dbReference type="HAMAP-Rule" id="MF_00178"/>
    </source>
</evidence>
<feature type="chain" id="PRO_1000040478" description="6,7-dimethyl-8-ribityllumazine synthase">
    <location>
        <begin position="1"/>
        <end position="158"/>
    </location>
</feature>
<feature type="active site" description="Proton donor" evidence="1">
    <location>
        <position position="93"/>
    </location>
</feature>
<feature type="binding site" evidence="1">
    <location>
        <position position="23"/>
    </location>
    <ligand>
        <name>5-amino-6-(D-ribitylamino)uracil</name>
        <dbReference type="ChEBI" id="CHEBI:15934"/>
    </ligand>
</feature>
<feature type="binding site" evidence="1">
    <location>
        <begin position="61"/>
        <end position="63"/>
    </location>
    <ligand>
        <name>5-amino-6-(D-ribitylamino)uracil</name>
        <dbReference type="ChEBI" id="CHEBI:15934"/>
    </ligand>
</feature>
<feature type="binding site" evidence="1">
    <location>
        <begin position="85"/>
        <end position="87"/>
    </location>
    <ligand>
        <name>5-amino-6-(D-ribitylamino)uracil</name>
        <dbReference type="ChEBI" id="CHEBI:15934"/>
    </ligand>
</feature>
<feature type="binding site" evidence="1">
    <location>
        <begin position="90"/>
        <end position="91"/>
    </location>
    <ligand>
        <name>(2S)-2-hydroxy-3-oxobutyl phosphate</name>
        <dbReference type="ChEBI" id="CHEBI:58830"/>
    </ligand>
</feature>
<feature type="binding site" evidence="1">
    <location>
        <position position="118"/>
    </location>
    <ligand>
        <name>5-amino-6-(D-ribitylamino)uracil</name>
        <dbReference type="ChEBI" id="CHEBI:15934"/>
    </ligand>
</feature>
<feature type="binding site" evidence="1">
    <location>
        <position position="132"/>
    </location>
    <ligand>
        <name>(2S)-2-hydroxy-3-oxobutyl phosphate</name>
        <dbReference type="ChEBI" id="CHEBI:58830"/>
    </ligand>
</feature>
<reference key="1">
    <citation type="journal article" date="2007" name="PLoS Genet.">
        <title>Patterns and implications of gene gain and loss in the evolution of Prochlorococcus.</title>
        <authorList>
            <person name="Kettler G.C."/>
            <person name="Martiny A.C."/>
            <person name="Huang K."/>
            <person name="Zucker J."/>
            <person name="Coleman M.L."/>
            <person name="Rodrigue S."/>
            <person name="Chen F."/>
            <person name="Lapidus A."/>
            <person name="Ferriera S."/>
            <person name="Johnson J."/>
            <person name="Steglich C."/>
            <person name="Church G.M."/>
            <person name="Richardson P."/>
            <person name="Chisholm S.W."/>
        </authorList>
    </citation>
    <scope>NUCLEOTIDE SEQUENCE [LARGE SCALE GENOMIC DNA]</scope>
    <source>
        <strain>MIT 9301</strain>
    </source>
</reference>